<evidence type="ECO:0000255" key="1">
    <source>
        <dbReference type="HAMAP-Rule" id="MF_01323"/>
    </source>
</evidence>
<keyword id="KW-0240">DNA-directed RNA polymerase</keyword>
<keyword id="KW-0460">Magnesium</keyword>
<keyword id="KW-0479">Metal-binding</keyword>
<keyword id="KW-0548">Nucleotidyltransferase</keyword>
<keyword id="KW-0804">Transcription</keyword>
<keyword id="KW-0808">Transferase</keyword>
<keyword id="KW-0862">Zinc</keyword>
<dbReference type="EC" id="2.7.7.6" evidence="1"/>
<dbReference type="EMBL" id="CP000110">
    <property type="protein sequence ID" value="ABB35806.1"/>
    <property type="molecule type" value="Genomic_DNA"/>
</dbReference>
<dbReference type="RefSeq" id="WP_011365015.1">
    <property type="nucleotide sequence ID" value="NC_007516.1"/>
</dbReference>
<dbReference type="SMR" id="Q3AHX6"/>
<dbReference type="STRING" id="110662.Syncc9605_2066"/>
<dbReference type="KEGG" id="syd:Syncc9605_2066"/>
<dbReference type="eggNOG" id="COG0086">
    <property type="taxonomic scope" value="Bacteria"/>
</dbReference>
<dbReference type="HOGENOM" id="CLU_030022_2_0_3"/>
<dbReference type="OrthoDB" id="9815296at2"/>
<dbReference type="GO" id="GO:0000428">
    <property type="term" value="C:DNA-directed RNA polymerase complex"/>
    <property type="evidence" value="ECO:0007669"/>
    <property type="project" value="UniProtKB-KW"/>
</dbReference>
<dbReference type="GO" id="GO:0003677">
    <property type="term" value="F:DNA binding"/>
    <property type="evidence" value="ECO:0007669"/>
    <property type="project" value="UniProtKB-UniRule"/>
</dbReference>
<dbReference type="GO" id="GO:0003899">
    <property type="term" value="F:DNA-directed RNA polymerase activity"/>
    <property type="evidence" value="ECO:0007669"/>
    <property type="project" value="UniProtKB-UniRule"/>
</dbReference>
<dbReference type="GO" id="GO:0000287">
    <property type="term" value="F:magnesium ion binding"/>
    <property type="evidence" value="ECO:0007669"/>
    <property type="project" value="UniProtKB-UniRule"/>
</dbReference>
<dbReference type="GO" id="GO:0008270">
    <property type="term" value="F:zinc ion binding"/>
    <property type="evidence" value="ECO:0007669"/>
    <property type="project" value="UniProtKB-UniRule"/>
</dbReference>
<dbReference type="GO" id="GO:0006351">
    <property type="term" value="P:DNA-templated transcription"/>
    <property type="evidence" value="ECO:0007669"/>
    <property type="project" value="UniProtKB-UniRule"/>
</dbReference>
<dbReference type="Gene3D" id="1.10.40.90">
    <property type="match status" value="1"/>
</dbReference>
<dbReference type="Gene3D" id="2.40.40.20">
    <property type="match status" value="1"/>
</dbReference>
<dbReference type="Gene3D" id="4.10.860.120">
    <property type="entry name" value="RNA polymerase II, clamp domain"/>
    <property type="match status" value="1"/>
</dbReference>
<dbReference type="Gene3D" id="1.10.274.100">
    <property type="entry name" value="RNA polymerase Rpb1, domain 3"/>
    <property type="match status" value="1"/>
</dbReference>
<dbReference type="HAMAP" id="MF_01323">
    <property type="entry name" value="RNApol_bact_RpoC1"/>
    <property type="match status" value="1"/>
</dbReference>
<dbReference type="InterPro" id="IPR012755">
    <property type="entry name" value="DNA-dir_RpoC1_gamma"/>
</dbReference>
<dbReference type="InterPro" id="IPR045867">
    <property type="entry name" value="DNA-dir_RpoC_beta_prime"/>
</dbReference>
<dbReference type="InterPro" id="IPR000722">
    <property type="entry name" value="RNA_pol_asu"/>
</dbReference>
<dbReference type="InterPro" id="IPR006592">
    <property type="entry name" value="RNA_pol_N"/>
</dbReference>
<dbReference type="InterPro" id="IPR007080">
    <property type="entry name" value="RNA_pol_Rpb1_1"/>
</dbReference>
<dbReference type="InterPro" id="IPR007066">
    <property type="entry name" value="RNA_pol_Rpb1_3"/>
</dbReference>
<dbReference type="InterPro" id="IPR042102">
    <property type="entry name" value="RNA_pol_Rpb1_3_sf"/>
</dbReference>
<dbReference type="InterPro" id="IPR044893">
    <property type="entry name" value="RNA_pol_Rpb1_clamp_domain"/>
</dbReference>
<dbReference type="InterPro" id="IPR034678">
    <property type="entry name" value="RNApol_RpoC1"/>
</dbReference>
<dbReference type="NCBIfam" id="NF002729">
    <property type="entry name" value="PRK02625.1"/>
    <property type="match status" value="1"/>
</dbReference>
<dbReference type="NCBIfam" id="TIGR02387">
    <property type="entry name" value="rpoC1_cyan"/>
    <property type="match status" value="1"/>
</dbReference>
<dbReference type="PANTHER" id="PTHR19376">
    <property type="entry name" value="DNA-DIRECTED RNA POLYMERASE"/>
    <property type="match status" value="1"/>
</dbReference>
<dbReference type="PANTHER" id="PTHR19376:SF54">
    <property type="entry name" value="DNA-DIRECTED RNA POLYMERASE SUBUNIT BETA"/>
    <property type="match status" value="1"/>
</dbReference>
<dbReference type="Pfam" id="PF04997">
    <property type="entry name" value="RNA_pol_Rpb1_1"/>
    <property type="match status" value="1"/>
</dbReference>
<dbReference type="Pfam" id="PF00623">
    <property type="entry name" value="RNA_pol_Rpb1_2"/>
    <property type="match status" value="1"/>
</dbReference>
<dbReference type="Pfam" id="PF04983">
    <property type="entry name" value="RNA_pol_Rpb1_3"/>
    <property type="match status" value="1"/>
</dbReference>
<dbReference type="SMART" id="SM00663">
    <property type="entry name" value="RPOLA_N"/>
    <property type="match status" value="1"/>
</dbReference>
<dbReference type="SUPFAM" id="SSF64484">
    <property type="entry name" value="beta and beta-prime subunits of DNA dependent RNA-polymerase"/>
    <property type="match status" value="1"/>
</dbReference>
<sequence>MTNSNLRTENHFDYVKITLASPDRVMEWGQRTLPNGQVVGEVTKPETINYRTLKPEMDGLFCEKIFGPSKDWECHCGKYKRVRHRGIVCERCGVEVTESRVRRHRMGFIKLAAPVSHVWYLKGIPSYVAILLDMPLRDVEQIVYFNCYVVLDPGDHKDLKYKQLLTEDEWLEIEDEIYAEDSEIENEPVVGIGAEALKQLLEDLTLDEVAEQLREEINGSKGQKRAKLIKRLRVIDNFIATNARPEWMVLDVIPVIPPDLRPMVQLDGGRFATSDLNDLYRRVINRNNRLARLQEILAPEIIVRNEKRMLQEAVDALIDNGRRGRTVVGANNRPLKSLSDIIEGKQGRFRQNLLGKRVDYSGRSVIVVGPKLKMHQCGLPKEMAIELFQPFVIHRLIRQNIVNNIKAAKKLIQRADDEVMQVLQEVIEGHPILLNRAPTLHRLGIQAFEPKLVDGRAIQLHPLVCPAFNADFDGDQMAVHVPLAIEAQTEARMLMLASNNILSPATGEPIITPSQDMVLGSYYLTALQPGASKPDFGDRSCTFAGLEDVIHAFEDNRIGLHDWVWVRFNGEVQDDEELDAPSKSESLSDGTRIEEWSYRRDRFDEDGALISRYILTTVGRVVMNHTIIDAVAAA</sequence>
<protein>
    <recommendedName>
        <fullName evidence="1">DNA-directed RNA polymerase subunit gamma</fullName>
        <shortName evidence="1">RNAP subunit gamma</shortName>
        <ecNumber evidence="1">2.7.7.6</ecNumber>
    </recommendedName>
    <alternativeName>
        <fullName evidence="1">RNA polymerase subunit gamma</fullName>
    </alternativeName>
    <alternativeName>
        <fullName evidence="1">Transcriptase subunit gamma</fullName>
    </alternativeName>
</protein>
<organism>
    <name type="scientific">Synechococcus sp. (strain CC9605)</name>
    <dbReference type="NCBI Taxonomy" id="110662"/>
    <lineage>
        <taxon>Bacteria</taxon>
        <taxon>Bacillati</taxon>
        <taxon>Cyanobacteriota</taxon>
        <taxon>Cyanophyceae</taxon>
        <taxon>Synechococcales</taxon>
        <taxon>Synechococcaceae</taxon>
        <taxon>Synechococcus</taxon>
    </lineage>
</organism>
<name>RPOC1_SYNSC</name>
<comment type="function">
    <text evidence="1">DNA-dependent RNA polymerase catalyzes the transcription of DNA into RNA using the four ribonucleoside triphosphates as substrates.</text>
</comment>
<comment type="catalytic activity">
    <reaction evidence="1">
        <text>RNA(n) + a ribonucleoside 5'-triphosphate = RNA(n+1) + diphosphate</text>
        <dbReference type="Rhea" id="RHEA:21248"/>
        <dbReference type="Rhea" id="RHEA-COMP:14527"/>
        <dbReference type="Rhea" id="RHEA-COMP:17342"/>
        <dbReference type="ChEBI" id="CHEBI:33019"/>
        <dbReference type="ChEBI" id="CHEBI:61557"/>
        <dbReference type="ChEBI" id="CHEBI:140395"/>
        <dbReference type="EC" id="2.7.7.6"/>
    </reaction>
</comment>
<comment type="cofactor">
    <cofactor evidence="1">
        <name>Mg(2+)</name>
        <dbReference type="ChEBI" id="CHEBI:18420"/>
    </cofactor>
    <text evidence="1">Binds 1 Mg(2+) ion per subunit.</text>
</comment>
<comment type="cofactor">
    <cofactor evidence="1">
        <name>Zn(2+)</name>
        <dbReference type="ChEBI" id="CHEBI:29105"/>
    </cofactor>
    <text evidence="1">Binds 1 Zn(2+) ion per subunit.</text>
</comment>
<comment type="subunit">
    <text evidence="1">In cyanobacteria the RNAP catalytic core is composed of 2 alpha, 1 beta, 1 beta', 1 gamma and 1 omega subunit. When a sigma factor is associated with the core the holoenzyme is formed, which can initiate transcription.</text>
</comment>
<comment type="similarity">
    <text evidence="1">Belongs to the RNA polymerase beta' chain family. RpoC1 subfamily.</text>
</comment>
<proteinExistence type="inferred from homology"/>
<reference key="1">
    <citation type="submission" date="2005-07" db="EMBL/GenBank/DDBJ databases">
        <title>Complete sequence of Synechococcus sp. CC9605.</title>
        <authorList>
            <consortium name="US DOE Joint Genome Institute"/>
            <person name="Copeland A."/>
            <person name="Lucas S."/>
            <person name="Lapidus A."/>
            <person name="Barry K."/>
            <person name="Detter J.C."/>
            <person name="Glavina T."/>
            <person name="Hammon N."/>
            <person name="Israni S."/>
            <person name="Pitluck S."/>
            <person name="Schmutz J."/>
            <person name="Martinez M."/>
            <person name="Larimer F."/>
            <person name="Land M."/>
            <person name="Kyrpides N."/>
            <person name="Ivanova N."/>
            <person name="Richardson P."/>
        </authorList>
    </citation>
    <scope>NUCLEOTIDE SEQUENCE [LARGE SCALE GENOMIC DNA]</scope>
    <source>
        <strain>CC9605</strain>
    </source>
</reference>
<feature type="chain" id="PRO_1000051998" description="DNA-directed RNA polymerase subunit gamma">
    <location>
        <begin position="1"/>
        <end position="634"/>
    </location>
</feature>
<feature type="binding site" evidence="1">
    <location>
        <position position="74"/>
    </location>
    <ligand>
        <name>Zn(2+)</name>
        <dbReference type="ChEBI" id="CHEBI:29105"/>
    </ligand>
</feature>
<feature type="binding site" evidence="1">
    <location>
        <position position="76"/>
    </location>
    <ligand>
        <name>Zn(2+)</name>
        <dbReference type="ChEBI" id="CHEBI:29105"/>
    </ligand>
</feature>
<feature type="binding site" evidence="1">
    <location>
        <position position="89"/>
    </location>
    <ligand>
        <name>Zn(2+)</name>
        <dbReference type="ChEBI" id="CHEBI:29105"/>
    </ligand>
</feature>
<feature type="binding site" evidence="1">
    <location>
        <position position="92"/>
    </location>
    <ligand>
        <name>Zn(2+)</name>
        <dbReference type="ChEBI" id="CHEBI:29105"/>
    </ligand>
</feature>
<feature type="binding site" evidence="1">
    <location>
        <position position="471"/>
    </location>
    <ligand>
        <name>Mg(2+)</name>
        <dbReference type="ChEBI" id="CHEBI:18420"/>
    </ligand>
</feature>
<feature type="binding site" evidence="1">
    <location>
        <position position="473"/>
    </location>
    <ligand>
        <name>Mg(2+)</name>
        <dbReference type="ChEBI" id="CHEBI:18420"/>
    </ligand>
</feature>
<feature type="binding site" evidence="1">
    <location>
        <position position="475"/>
    </location>
    <ligand>
        <name>Mg(2+)</name>
        <dbReference type="ChEBI" id="CHEBI:18420"/>
    </ligand>
</feature>
<accession>Q3AHX6</accession>
<gene>
    <name evidence="1" type="primary">rpoC1</name>
    <name type="ordered locus">Syncc9605_2066</name>
</gene>